<gene>
    <name evidence="8" type="primary">sidI</name>
    <name type="ORF">AFUA_1G17190</name>
</gene>
<name>SIDI_ASPFU</name>
<dbReference type="EC" id="6.2.1.-" evidence="10"/>
<dbReference type="EMBL" id="AAHF01000004">
    <property type="protein sequence ID" value="EAL91049.1"/>
    <property type="molecule type" value="Genomic_DNA"/>
</dbReference>
<dbReference type="RefSeq" id="XP_753087.1">
    <property type="nucleotide sequence ID" value="XM_747994.1"/>
</dbReference>
<dbReference type="SMR" id="Q4WR83"/>
<dbReference type="STRING" id="330879.Q4WR83"/>
<dbReference type="EnsemblFungi" id="EAL91049">
    <property type="protein sequence ID" value="EAL91049"/>
    <property type="gene ID" value="AFUA_1G17190"/>
</dbReference>
<dbReference type="GeneID" id="3510119"/>
<dbReference type="KEGG" id="afm:AFUA_1G17190"/>
<dbReference type="VEuPathDB" id="FungiDB:Afu1g17190"/>
<dbReference type="eggNOG" id="KOG1177">
    <property type="taxonomic scope" value="Eukaryota"/>
</dbReference>
<dbReference type="HOGENOM" id="CLU_000022_59_7_1"/>
<dbReference type="InParanoid" id="Q4WR83"/>
<dbReference type="OMA" id="ELNMTEY"/>
<dbReference type="OrthoDB" id="10253115at2759"/>
<dbReference type="PHI-base" id="PHI:2321"/>
<dbReference type="Proteomes" id="UP000002530">
    <property type="component" value="Chromosome 1"/>
</dbReference>
<dbReference type="GO" id="GO:0005777">
    <property type="term" value="C:peroxisome"/>
    <property type="evidence" value="ECO:0000314"/>
    <property type="project" value="AspGD"/>
</dbReference>
<dbReference type="GO" id="GO:0005524">
    <property type="term" value="F:ATP binding"/>
    <property type="evidence" value="ECO:0007669"/>
    <property type="project" value="UniProtKB-KW"/>
</dbReference>
<dbReference type="GO" id="GO:0031956">
    <property type="term" value="F:medium-chain fatty acid-CoA ligase activity"/>
    <property type="evidence" value="ECO:0000318"/>
    <property type="project" value="GO_Central"/>
</dbReference>
<dbReference type="GO" id="GO:0070301">
    <property type="term" value="P:cellular response to hydrogen peroxide"/>
    <property type="evidence" value="ECO:0000315"/>
    <property type="project" value="AspGD"/>
</dbReference>
<dbReference type="GO" id="GO:0010106">
    <property type="term" value="P:cellular response to iron ion starvation"/>
    <property type="evidence" value="ECO:0000315"/>
    <property type="project" value="AspGD"/>
</dbReference>
<dbReference type="GO" id="GO:0006696">
    <property type="term" value="P:ergosterol biosynthetic process"/>
    <property type="evidence" value="ECO:0000315"/>
    <property type="project" value="AspGD"/>
</dbReference>
<dbReference type="GO" id="GO:0006631">
    <property type="term" value="P:fatty acid metabolic process"/>
    <property type="evidence" value="ECO:0000318"/>
    <property type="project" value="GO_Central"/>
</dbReference>
<dbReference type="GO" id="GO:0031171">
    <property type="term" value="P:ferricrocin biosynthetic process"/>
    <property type="evidence" value="ECO:0000315"/>
    <property type="project" value="AspGD"/>
</dbReference>
<dbReference type="GO" id="GO:1900551">
    <property type="term" value="P:N',N'',N'''-triacetylfusarinine C biosynthetic process"/>
    <property type="evidence" value="ECO:0000315"/>
    <property type="project" value="AspGD"/>
</dbReference>
<dbReference type="CDD" id="cd05917">
    <property type="entry name" value="FACL_like_2"/>
    <property type="match status" value="1"/>
</dbReference>
<dbReference type="FunFam" id="3.30.300.30:FF:000063">
    <property type="entry name" value="Acyl-CoA ligase sidI"/>
    <property type="match status" value="1"/>
</dbReference>
<dbReference type="FunFam" id="3.40.50.12780:FF:000003">
    <property type="entry name" value="Long-chain-fatty-acid--CoA ligase FadD"/>
    <property type="match status" value="1"/>
</dbReference>
<dbReference type="Gene3D" id="3.30.300.30">
    <property type="match status" value="1"/>
</dbReference>
<dbReference type="Gene3D" id="3.40.50.12780">
    <property type="entry name" value="N-terminal domain of ligase-like"/>
    <property type="match status" value="1"/>
</dbReference>
<dbReference type="InterPro" id="IPR025110">
    <property type="entry name" value="AMP-bd_C"/>
</dbReference>
<dbReference type="InterPro" id="IPR045851">
    <property type="entry name" value="AMP-bd_C_sf"/>
</dbReference>
<dbReference type="InterPro" id="IPR020845">
    <property type="entry name" value="AMP-binding_CS"/>
</dbReference>
<dbReference type="InterPro" id="IPR000873">
    <property type="entry name" value="AMP-dep_synth/lig_dom"/>
</dbReference>
<dbReference type="InterPro" id="IPR042099">
    <property type="entry name" value="ANL_N_sf"/>
</dbReference>
<dbReference type="PANTHER" id="PTHR43201:SF6">
    <property type="entry name" value="ACYL COA SYNTHETASE (EUROFUNG)"/>
    <property type="match status" value="1"/>
</dbReference>
<dbReference type="PANTHER" id="PTHR43201">
    <property type="entry name" value="ACYL-COA SYNTHETASE"/>
    <property type="match status" value="1"/>
</dbReference>
<dbReference type="Pfam" id="PF00501">
    <property type="entry name" value="AMP-binding"/>
    <property type="match status" value="1"/>
</dbReference>
<dbReference type="Pfam" id="PF13193">
    <property type="entry name" value="AMP-binding_C"/>
    <property type="match status" value="1"/>
</dbReference>
<dbReference type="SUPFAM" id="SSF56801">
    <property type="entry name" value="Acetyl-CoA synthetase-like"/>
    <property type="match status" value="1"/>
</dbReference>
<dbReference type="PROSITE" id="PS00455">
    <property type="entry name" value="AMP_BINDING"/>
    <property type="match status" value="1"/>
</dbReference>
<organism>
    <name type="scientific">Aspergillus fumigatus (strain ATCC MYA-4609 / CBS 101355 / FGSC A1100 / Af293)</name>
    <name type="common">Neosartorya fumigata</name>
    <dbReference type="NCBI Taxonomy" id="330879"/>
    <lineage>
        <taxon>Eukaryota</taxon>
        <taxon>Fungi</taxon>
        <taxon>Dikarya</taxon>
        <taxon>Ascomycota</taxon>
        <taxon>Pezizomycotina</taxon>
        <taxon>Eurotiomycetes</taxon>
        <taxon>Eurotiomycetidae</taxon>
        <taxon>Eurotiales</taxon>
        <taxon>Aspergillaceae</taxon>
        <taxon>Aspergillus</taxon>
        <taxon>Aspergillus subgen. Fumigati</taxon>
    </lineage>
</organism>
<reference key="1">
    <citation type="journal article" date="2005" name="Nature">
        <title>Genomic sequence of the pathogenic and allergenic filamentous fungus Aspergillus fumigatus.</title>
        <authorList>
            <person name="Nierman W.C."/>
            <person name="Pain A."/>
            <person name="Anderson M.J."/>
            <person name="Wortman J.R."/>
            <person name="Kim H.S."/>
            <person name="Arroyo J."/>
            <person name="Berriman M."/>
            <person name="Abe K."/>
            <person name="Archer D.B."/>
            <person name="Bermejo C."/>
            <person name="Bennett J.W."/>
            <person name="Bowyer P."/>
            <person name="Chen D."/>
            <person name="Collins M."/>
            <person name="Coulsen R."/>
            <person name="Davies R."/>
            <person name="Dyer P.S."/>
            <person name="Farman M.L."/>
            <person name="Fedorova N."/>
            <person name="Fedorova N.D."/>
            <person name="Feldblyum T.V."/>
            <person name="Fischer R."/>
            <person name="Fosker N."/>
            <person name="Fraser A."/>
            <person name="Garcia J.L."/>
            <person name="Garcia M.J."/>
            <person name="Goble A."/>
            <person name="Goldman G.H."/>
            <person name="Gomi K."/>
            <person name="Griffith-Jones S."/>
            <person name="Gwilliam R."/>
            <person name="Haas B.J."/>
            <person name="Haas H."/>
            <person name="Harris D.E."/>
            <person name="Horiuchi H."/>
            <person name="Huang J."/>
            <person name="Humphray S."/>
            <person name="Jimenez J."/>
            <person name="Keller N."/>
            <person name="Khouri H."/>
            <person name="Kitamoto K."/>
            <person name="Kobayashi T."/>
            <person name="Konzack S."/>
            <person name="Kulkarni R."/>
            <person name="Kumagai T."/>
            <person name="Lafton A."/>
            <person name="Latge J.-P."/>
            <person name="Li W."/>
            <person name="Lord A."/>
            <person name="Lu C."/>
            <person name="Majoros W.H."/>
            <person name="May G.S."/>
            <person name="Miller B.L."/>
            <person name="Mohamoud Y."/>
            <person name="Molina M."/>
            <person name="Monod M."/>
            <person name="Mouyna I."/>
            <person name="Mulligan S."/>
            <person name="Murphy L.D."/>
            <person name="O'Neil S."/>
            <person name="Paulsen I."/>
            <person name="Penalva M.A."/>
            <person name="Pertea M."/>
            <person name="Price C."/>
            <person name="Pritchard B.L."/>
            <person name="Quail M.A."/>
            <person name="Rabbinowitsch E."/>
            <person name="Rawlins N."/>
            <person name="Rajandream M.A."/>
            <person name="Reichard U."/>
            <person name="Renauld H."/>
            <person name="Robson G.D."/>
            <person name="Rodriguez de Cordoba S."/>
            <person name="Rodriguez-Pena J.M."/>
            <person name="Ronning C.M."/>
            <person name="Rutter S."/>
            <person name="Salzberg S.L."/>
            <person name="Sanchez M."/>
            <person name="Sanchez-Ferrero J.C."/>
            <person name="Saunders D."/>
            <person name="Seeger K."/>
            <person name="Squares R."/>
            <person name="Squares S."/>
            <person name="Takeuchi M."/>
            <person name="Tekaia F."/>
            <person name="Turner G."/>
            <person name="Vazquez de Aldana C.R."/>
            <person name="Weidman J."/>
            <person name="White O."/>
            <person name="Woodward J.R."/>
            <person name="Yu J.-H."/>
            <person name="Fraser C.M."/>
            <person name="Galagan J.E."/>
            <person name="Asai K."/>
            <person name="Machida M."/>
            <person name="Hall N."/>
            <person name="Barrell B.G."/>
            <person name="Denning D.W."/>
        </authorList>
    </citation>
    <scope>NUCLEOTIDE SEQUENCE [LARGE SCALE GENOMIC DNA]</scope>
    <source>
        <strain>ATCC MYA-4609 / CBS 101355 / FGSC A1100 / Af293</strain>
    </source>
</reference>
<reference key="2">
    <citation type="journal article" date="2004" name="J. Exp. Med.">
        <title>Siderophore biosynthesis but not reductive iron assimilation is essential for Aspergillus fumigatus virulence.</title>
        <authorList>
            <person name="Schrettl M."/>
            <person name="Bignell E."/>
            <person name="Kragl C."/>
            <person name="Joechl C."/>
            <person name="Rogers T."/>
            <person name="Arst H.N. Jr."/>
            <person name="Haynes K."/>
            <person name="Haas H."/>
        </authorList>
    </citation>
    <scope>FUNCTION</scope>
</reference>
<reference key="3">
    <citation type="journal article" date="2005" name="Infect. Immun.">
        <title>The Aspergillus fumigatus siderophore biosynthetic gene sidA, encoding L-ornithine N(5)-oxygenase, is required for virulence.</title>
        <authorList>
            <person name="Hissen A.H."/>
            <person name="Wan A.N."/>
            <person name="Warwas M.L."/>
            <person name="Pinto L.J."/>
            <person name="Moore M.M."/>
        </authorList>
    </citation>
    <scope>FUNCTION</scope>
</reference>
<reference key="4">
    <citation type="journal article" date="2007" name="PLoS Pathog.">
        <title>Distinct roles for intra- and extracellular siderophores during Aspergillus fumigatus infection.</title>
        <authorList>
            <person name="Schrettl M."/>
            <person name="Bignell E."/>
            <person name="Kragl C."/>
            <person name="Sabiha Y."/>
            <person name="Loss O."/>
            <person name="Eisendle M."/>
            <person name="Wallner A."/>
            <person name="Arst H.N. Jr."/>
            <person name="Haynes K."/>
            <person name="Haas H."/>
        </authorList>
    </citation>
    <scope>FUNCTION</scope>
</reference>
<reference key="5">
    <citation type="journal article" date="2008" name="Mol. Microbiol.">
        <title>SreA-mediated iron regulation in Aspergillus fumigatus.</title>
        <authorList>
            <person name="Schrettl M."/>
            <person name="Kim H.S."/>
            <person name="Eisendle M."/>
            <person name="Kragl C."/>
            <person name="Nierman W.C."/>
            <person name="Heinekamp T."/>
            <person name="Werner E.R."/>
            <person name="Jacobsen I."/>
            <person name="Illmer P."/>
            <person name="Yi H."/>
            <person name="Brakhage A.A."/>
            <person name="Haas H."/>
        </authorList>
    </citation>
    <scope>INDUCTION</scope>
</reference>
<reference key="6">
    <citation type="journal article" date="2011" name="Appl. Environ. Microbiol.">
        <title>SidL, an Aspergillus fumigatus transacetylase involved in biosynthesis of the siderophores ferricrocin and hydroxyferricrocin.</title>
        <authorList>
            <person name="Blatzer M."/>
            <person name="Schrettl M."/>
            <person name="Sarg B."/>
            <person name="Lindner H.H."/>
            <person name="Pfaller K."/>
            <person name="Haas H."/>
        </authorList>
    </citation>
    <scope>FUNCTION</scope>
</reference>
<reference key="7">
    <citation type="journal article" date="2012" name="Proc. Natl. Acad. Sci. U.S.A.">
        <title>Mevalonate governs interdependency of ergosterol and siderophore biosyntheses in the fungal pathogen Aspergillus fumigatus.</title>
        <authorList>
            <person name="Yasmin S."/>
            <person name="Alcazar-Fuoli L."/>
            <person name="Gruendlinger M."/>
            <person name="Puempel T."/>
            <person name="Cairns T."/>
            <person name="Blatzer M."/>
            <person name="Lopez J.F."/>
            <person name="Grimalt J.O."/>
            <person name="Bignell E."/>
            <person name="Haas H."/>
        </authorList>
    </citation>
    <scope>FUNCTION</scope>
    <scope>DISRUPTION PHENOTYPE</scope>
</reference>
<reference key="8">
    <citation type="journal article" date="2013" name="Mol. Microbiol.">
        <title>Fungal siderophore biosynthesis is partially localized in peroxisomes.</title>
        <authorList>
            <person name="Gruendlinger M."/>
            <person name="Yasmin S."/>
            <person name="Lechner B.E."/>
            <person name="Geley S."/>
            <person name="Schrettl M."/>
            <person name="Hynes M."/>
            <person name="Haas H."/>
        </authorList>
    </citation>
    <scope>SUBCELLULAR LOCATION</scope>
    <scope>PEROXISOMAL TARGETING SIGNAL</scope>
    <scope>FUNCTION</scope>
</reference>
<feature type="chain" id="PRO_0000444397" description="Acyl-CoA ligase sidI">
    <location>
        <begin position="1"/>
        <end position="590"/>
    </location>
</feature>
<feature type="short sequence motif" description="PTS2-type peroxisomal targeting signal" evidence="7">
    <location>
        <begin position="6"/>
        <end position="14"/>
    </location>
</feature>
<feature type="binding site" evidence="1">
    <location>
        <begin position="220"/>
        <end position="228"/>
    </location>
    <ligand>
        <name>ATP</name>
        <dbReference type="ChEBI" id="CHEBI:30616"/>
    </ligand>
</feature>
<feature type="binding site" evidence="1">
    <location>
        <begin position="359"/>
        <end position="364"/>
    </location>
    <ligand>
        <name>ATP</name>
        <dbReference type="ChEBI" id="CHEBI:30616"/>
    </ligand>
</feature>
<feature type="binding site" evidence="1">
    <location>
        <position position="364"/>
    </location>
    <ligand>
        <name>substrate</name>
    </ligand>
</feature>
<feature type="binding site" evidence="1">
    <location>
        <position position="449"/>
    </location>
    <ligand>
        <name>ATP</name>
        <dbReference type="ChEBI" id="CHEBI:30616"/>
    </ligand>
</feature>
<feature type="binding site" evidence="1">
    <location>
        <position position="464"/>
    </location>
    <ligand>
        <name>ATP</name>
        <dbReference type="ChEBI" id="CHEBI:30616"/>
    </ligand>
</feature>
<feature type="binding site" evidence="1">
    <location>
        <begin position="472"/>
        <end position="474"/>
    </location>
    <ligand>
        <name>CoA</name>
        <dbReference type="ChEBI" id="CHEBI:57287"/>
    </ligand>
</feature>
<feature type="binding site" evidence="1">
    <location>
        <begin position="543"/>
        <end position="545"/>
    </location>
    <ligand>
        <name>CoA</name>
        <dbReference type="ChEBI" id="CHEBI:57287"/>
    </ligand>
</feature>
<feature type="binding site" evidence="1">
    <location>
        <position position="563"/>
    </location>
    <ligand>
        <name>ATP</name>
        <dbReference type="ChEBI" id="CHEBI:30616"/>
    </ligand>
</feature>
<keyword id="KW-0067">ATP-binding</keyword>
<keyword id="KW-0436">Ligase</keyword>
<keyword id="KW-0547">Nucleotide-binding</keyword>
<keyword id="KW-0576">Peroxisome</keyword>
<keyword id="KW-1185">Reference proteome</keyword>
<protein>
    <recommendedName>
        <fullName evidence="8">Acyl-CoA ligase sidI</fullName>
        <ecNumber evidence="10">6.2.1.-</ecNumber>
    </recommendedName>
    <alternativeName>
        <fullName evidence="8">Siderophore biosynthesis protein I</fullName>
    </alternativeName>
</protein>
<sequence length="590" mass="64956">MATIRRLQQTLSHLRPPKAPQLLSIVEGPTQPELLDITLGELLTLQSLQYGDYECLVFPWTGARWTYTDLKDEADRVARGLLAMGIQKGDRIGIMAGNCEQYISVFFAAARVGAILVVLNNTYTPSELYYALGHTDCRLLFLTPRIGRHSLEEVLAKLGPRPKEQGTSSALEEIIILRGQYSGFSTYEHVIQRGLPLPSHALQDREAELHSTDVCNLQFTSGSTGNPKAAMLTHHNLVNNSRFIGDRMNLTSFDILCCPPPLFHCFGLVLGMLAVVTHGSKIIFPSETFDPTAVLHAISDEKCTALHGVPTMFEAILSLPKPPNFDCSNLRTGIIAGAPVPRPLMKRLLEELNMTEYTSSYGLTEASPTCFNALTTDSIERRLTTVGKVMPHAKAKIIDTQGHIVPIGQRGELCIAGYQLTKGYWNNPEKTAEALITDSDGVTWLKTGDEAIFDEEGYCSITGRFKDIIIRGGENIYPLEIEERLAAHPAIEVASVIGIPDQKYGEVVGAFLALAADVSARPSDEELRAWTRETLGRHKAPQYFFVFGEEGVDRTIPVTGSGKVRKVDLRKIAASVLERRLAKTAAIKEK</sequence>
<accession>Q4WR83</accession>
<comment type="function">
    <text evidence="2 3 4 5 6">Acyl-CoA ligase; part of the siderophore biosynthetic pathway (PubMed:22106303). Aspergillus fumigatus produces 4 types of siderophores, low-molecular-mass iron chelators, including excreted fusarinine C (FsC) and triacetylfusarinine C (TAFC) for iron uptake and intacellular ferricrocin (FC) for hyphal and hydroxyferricrocin (HFC) for conidial iron distribution and storage. TAFC consists of 3 N(2)-acetyl-N(5)-anhydromevalonyl-N(5)-hydroxyornithine residues cyclically linked by ester bonds; FC is a cyclic hexapeptide with the structure Gly-Ser-Gly-(N(5)-acetyl-N(5)-hydroxyornithine)x3. The biosynthesis of all four siderophores depends on the hydroxylation of ornithine, catalyzed by the monooxygenase sidA (PubMed:15504822, PubMed:16113265). Subsequently, the pathways for biosynthesis of extra- and intracellular siderophores split (PubMed:17845073). For biosynthesis of extracellular siderophores, the transacylase sidF transfers anhydromevalonyl to N(5)-hydroxyornithine (PubMed:17845073). The required anhydromevalonyl-CoA moiety is derived from mevalonate by CoA ligation and dehydration catalyzed by sidI and sidH respectively (PubMed:22106303). The acetylation of N(5)-hydroxyornithine for FC biosynthesis involves the constitutively expressed sidL (PubMed:21622789). FC is hydroxylated to HFC by an as yet uncharacterized enzyme during conidiation (PubMed:17845073). Assembly of fusarinine C (FsC) and FC is catalyzed by two different nonribosomal peptide synthetases (NRPS), sidD and sidC respectively (PubMed:17845073). Subsequently, sidG catalyzes N2-acetylation of FsC for forming TAFC (PubMed:17845073). Both extra- and intracellular siderophores are crucial for growth during iron limitation and virulence (PubMed:16113265).</text>
</comment>
<comment type="pathway">
    <text evidence="6">Siderophore biosynthesis.</text>
</comment>
<comment type="subcellular location">
    <subcellularLocation>
        <location evidence="7">Peroxisome</location>
    </subcellularLocation>
    <text evidence="7">Targeted to peroxisomes via its PTS2-type peroxisomal targeting signal and the corresponding receptor pexG (PubMed:23617799).</text>
</comment>
<comment type="disruption phenotype">
    <text evidence="6">Blocks TAFC biosynthesis, decreases resistance to oxidative stress, and attenuates virulence in a murine model of invasive pulmonary aspergillosis (PubMed:22106303).</text>
</comment>
<comment type="similarity">
    <text evidence="9">Belongs to the ATP-dependent AMP-binding enzyme family.</text>
</comment>
<proteinExistence type="evidence at transcript level"/>
<evidence type="ECO:0000250" key="1">
    <source>
        <dbReference type="UniProtKB" id="Q08AH3"/>
    </source>
</evidence>
<evidence type="ECO:0000269" key="2">
    <source>
    </source>
</evidence>
<evidence type="ECO:0000269" key="3">
    <source>
    </source>
</evidence>
<evidence type="ECO:0000269" key="4">
    <source>
    </source>
</evidence>
<evidence type="ECO:0000269" key="5">
    <source>
    </source>
</evidence>
<evidence type="ECO:0000269" key="6">
    <source>
    </source>
</evidence>
<evidence type="ECO:0000269" key="7">
    <source>
    </source>
</evidence>
<evidence type="ECO:0000303" key="8">
    <source>
    </source>
</evidence>
<evidence type="ECO:0000305" key="9"/>
<evidence type="ECO:0000305" key="10">
    <source>
    </source>
</evidence>